<feature type="chain" id="PRO_0000123558" description="tRNA (adenine(58)-N(1))-methyltransferase non-catalytic subunit TRM6">
    <location>
        <begin position="1"/>
        <end position="478"/>
    </location>
</feature>
<feature type="region of interest" description="Disordered" evidence="1">
    <location>
        <begin position="456"/>
        <end position="478"/>
    </location>
</feature>
<feature type="compositionally biased region" description="Basic and acidic residues" evidence="1">
    <location>
        <begin position="464"/>
        <end position="478"/>
    </location>
</feature>
<feature type="turn" evidence="11">
    <location>
        <begin position="3"/>
        <end position="5"/>
    </location>
</feature>
<feature type="strand" evidence="11">
    <location>
        <begin position="12"/>
        <end position="16"/>
    </location>
</feature>
<feature type="strand" evidence="11">
    <location>
        <begin position="22"/>
        <end position="26"/>
    </location>
</feature>
<feature type="strand" evidence="11">
    <location>
        <begin position="32"/>
        <end position="34"/>
    </location>
</feature>
<feature type="helix" evidence="11">
    <location>
        <begin position="36"/>
        <end position="38"/>
    </location>
</feature>
<feature type="strand" evidence="11">
    <location>
        <begin position="40"/>
        <end position="42"/>
    </location>
</feature>
<feature type="helix" evidence="11">
    <location>
        <begin position="43"/>
        <end position="46"/>
    </location>
</feature>
<feature type="strand" evidence="11">
    <location>
        <begin position="53"/>
        <end position="58"/>
    </location>
</feature>
<feature type="strand" evidence="11">
    <location>
        <begin position="82"/>
        <end position="86"/>
    </location>
</feature>
<feature type="strand" evidence="11">
    <location>
        <begin position="189"/>
        <end position="194"/>
    </location>
</feature>
<feature type="helix" evidence="11">
    <location>
        <begin position="198"/>
        <end position="208"/>
    </location>
</feature>
<feature type="turn" evidence="11">
    <location>
        <begin position="211"/>
        <end position="216"/>
    </location>
</feature>
<feature type="helix" evidence="11">
    <location>
        <begin position="219"/>
        <end position="228"/>
    </location>
</feature>
<feature type="strand" evidence="11">
    <location>
        <begin position="236"/>
        <end position="241"/>
    </location>
</feature>
<feature type="strand" evidence="11">
    <location>
        <begin position="243"/>
        <end position="245"/>
    </location>
</feature>
<feature type="helix" evidence="11">
    <location>
        <begin position="246"/>
        <end position="256"/>
    </location>
</feature>
<feature type="strand" evidence="11">
    <location>
        <begin position="267"/>
        <end position="276"/>
    </location>
</feature>
<feature type="helix" evidence="11">
    <location>
        <begin position="280"/>
        <end position="284"/>
    </location>
</feature>
<feature type="helix" evidence="11">
    <location>
        <begin position="289"/>
        <end position="295"/>
    </location>
</feature>
<feature type="strand" evidence="11">
    <location>
        <begin position="296"/>
        <end position="300"/>
    </location>
</feature>
<feature type="helix" evidence="11">
    <location>
        <begin position="301"/>
        <end position="305"/>
    </location>
</feature>
<feature type="helix" evidence="11">
    <location>
        <begin position="310"/>
        <end position="314"/>
    </location>
</feature>
<feature type="helix" evidence="12">
    <location>
        <begin position="322"/>
        <end position="327"/>
    </location>
</feature>
<feature type="helix" evidence="11">
    <location>
        <begin position="330"/>
        <end position="353"/>
    </location>
</feature>
<feature type="strand" evidence="11">
    <location>
        <begin position="361"/>
        <end position="364"/>
    </location>
</feature>
<feature type="helix" evidence="11">
    <location>
        <begin position="369"/>
        <end position="371"/>
    </location>
</feature>
<feature type="helix" evidence="11">
    <location>
        <begin position="373"/>
        <end position="376"/>
    </location>
</feature>
<feature type="helix" evidence="11">
    <location>
        <begin position="377"/>
        <end position="379"/>
    </location>
</feature>
<feature type="strand" evidence="11">
    <location>
        <begin position="385"/>
        <end position="391"/>
    </location>
</feature>
<feature type="helix" evidence="11">
    <location>
        <begin position="393"/>
        <end position="404"/>
    </location>
</feature>
<feature type="strand" evidence="11">
    <location>
        <begin position="409"/>
        <end position="423"/>
    </location>
</feature>
<feature type="strand" evidence="11">
    <location>
        <begin position="441"/>
        <end position="447"/>
    </location>
</feature>
<gene>
    <name type="primary">GCD10</name>
    <name type="synonym">TIF33</name>
    <name type="synonym">TRM6</name>
    <name type="ordered locus">YNL062C</name>
    <name type="ORF">N2422</name>
</gene>
<protein>
    <recommendedName>
        <fullName>tRNA (adenine(58)-N(1))-methyltransferase non-catalytic subunit TRM6</fullName>
    </recommendedName>
    <alternativeName>
        <fullName>General control non-derepressible protein 10</fullName>
        <shortName>Protein GCD10</shortName>
    </alternativeName>
    <alternativeName>
        <fullName>tRNA(m1A58)-methyltransferase subunit TRM6</fullName>
        <shortName>tRNA(m1A58)MTase subunit TRM6</shortName>
    </alternativeName>
</protein>
<accession>P41814</accession>
<accession>D6W1B8</accession>
<dbReference type="EMBL" id="X83511">
    <property type="protein sequence ID" value="CAA58501.1"/>
    <property type="molecule type" value="Genomic_DNA"/>
</dbReference>
<dbReference type="EMBL" id="U12141">
    <property type="protein sequence ID" value="AAA99649.1"/>
    <property type="molecule type" value="Genomic_DNA"/>
</dbReference>
<dbReference type="EMBL" id="Z71338">
    <property type="protein sequence ID" value="CAA95935.1"/>
    <property type="molecule type" value="Genomic_DNA"/>
</dbReference>
<dbReference type="EMBL" id="BK006947">
    <property type="protein sequence ID" value="DAA10484.1"/>
    <property type="molecule type" value="Genomic_DNA"/>
</dbReference>
<dbReference type="PIR" id="S51669">
    <property type="entry name" value="S51669"/>
</dbReference>
<dbReference type="RefSeq" id="NP_014337.3">
    <property type="nucleotide sequence ID" value="NM_001182900.3"/>
</dbReference>
<dbReference type="PDB" id="5EQJ">
    <property type="method" value="X-ray"/>
    <property type="resolution" value="2.20 A"/>
    <property type="chains" value="A=1-478"/>
</dbReference>
<dbReference type="PDB" id="5ERG">
    <property type="method" value="X-ray"/>
    <property type="resolution" value="2.20 A"/>
    <property type="chains" value="A=1-478"/>
</dbReference>
<dbReference type="PDBsum" id="5EQJ"/>
<dbReference type="PDBsum" id="5ERG"/>
<dbReference type="SMR" id="P41814"/>
<dbReference type="BioGRID" id="35761">
    <property type="interactions" value="268"/>
</dbReference>
<dbReference type="ComplexPortal" id="CPX-1631">
    <property type="entry name" value="tRNA (adenine(58)-N(1))-methyltransferase complex"/>
</dbReference>
<dbReference type="DIP" id="DIP-3842N"/>
<dbReference type="FunCoup" id="P41814">
    <property type="interactions" value="1120"/>
</dbReference>
<dbReference type="IntAct" id="P41814">
    <property type="interactions" value="2"/>
</dbReference>
<dbReference type="MINT" id="P41814"/>
<dbReference type="STRING" id="4932.YNL062C"/>
<dbReference type="iPTMnet" id="P41814"/>
<dbReference type="PaxDb" id="4932-YNL062C"/>
<dbReference type="PeptideAtlas" id="P41814"/>
<dbReference type="EnsemblFungi" id="YNL062C_mRNA">
    <property type="protein sequence ID" value="YNL062C"/>
    <property type="gene ID" value="YNL062C"/>
</dbReference>
<dbReference type="GeneID" id="855663"/>
<dbReference type="KEGG" id="sce:YNL062C"/>
<dbReference type="AGR" id="SGD:S000005006"/>
<dbReference type="SGD" id="S000005006">
    <property type="gene designation" value="GCD10"/>
</dbReference>
<dbReference type="VEuPathDB" id="FungiDB:YNL062C"/>
<dbReference type="eggNOG" id="KOG1416">
    <property type="taxonomic scope" value="Eukaryota"/>
</dbReference>
<dbReference type="GeneTree" id="ENSGT00390000008327"/>
<dbReference type="HOGENOM" id="CLU_010916_1_1_1"/>
<dbReference type="InParanoid" id="P41814"/>
<dbReference type="OMA" id="TRCRPYQ"/>
<dbReference type="OrthoDB" id="10254665at2759"/>
<dbReference type="BioCyc" id="MetaCyc:G3O-33092-MONOMER"/>
<dbReference type="BioCyc" id="YEAST:G3O-33092-MONOMER"/>
<dbReference type="BRENDA" id="2.1.1.220">
    <property type="organism ID" value="984"/>
</dbReference>
<dbReference type="BioGRID-ORCS" id="855663">
    <property type="hits" value="4 hits in 10 CRISPR screens"/>
</dbReference>
<dbReference type="PRO" id="PR:P41814"/>
<dbReference type="Proteomes" id="UP000002311">
    <property type="component" value="Chromosome XIV"/>
</dbReference>
<dbReference type="RNAct" id="P41814">
    <property type="molecule type" value="protein"/>
</dbReference>
<dbReference type="GO" id="GO:0005634">
    <property type="term" value="C:nucleus"/>
    <property type="evidence" value="ECO:0000314"/>
    <property type="project" value="ComplexPortal"/>
</dbReference>
<dbReference type="GO" id="GO:0031515">
    <property type="term" value="C:tRNA (m1A) methyltransferase complex"/>
    <property type="evidence" value="ECO:0000314"/>
    <property type="project" value="SGD"/>
</dbReference>
<dbReference type="GO" id="GO:0003723">
    <property type="term" value="F:RNA binding"/>
    <property type="evidence" value="ECO:0007669"/>
    <property type="project" value="UniProtKB-KW"/>
</dbReference>
<dbReference type="GO" id="GO:0030488">
    <property type="term" value="P:tRNA methylation"/>
    <property type="evidence" value="ECO:0000314"/>
    <property type="project" value="ComplexPortal"/>
</dbReference>
<dbReference type="DisProt" id="DP02050"/>
<dbReference type="InterPro" id="IPR017423">
    <property type="entry name" value="TRM6"/>
</dbReference>
<dbReference type="PANTHER" id="PTHR12945">
    <property type="entry name" value="TRANSLATION INITIATION FACTOR EIF3-RELATED"/>
    <property type="match status" value="1"/>
</dbReference>
<dbReference type="PANTHER" id="PTHR12945:SF0">
    <property type="entry name" value="TRNA (ADENINE(58)-N(1))-METHYLTRANSFERASE NON-CATALYTIC SUBUNIT TRM6"/>
    <property type="match status" value="1"/>
</dbReference>
<dbReference type="Pfam" id="PF04189">
    <property type="entry name" value="Gcd10p"/>
    <property type="match status" value="1"/>
</dbReference>
<dbReference type="PIRSF" id="PIRSF038170">
    <property type="entry name" value="tRNA_m1A_mtfrase"/>
    <property type="match status" value="1"/>
</dbReference>
<organism>
    <name type="scientific">Saccharomyces cerevisiae (strain ATCC 204508 / S288c)</name>
    <name type="common">Baker's yeast</name>
    <dbReference type="NCBI Taxonomy" id="559292"/>
    <lineage>
        <taxon>Eukaryota</taxon>
        <taxon>Fungi</taxon>
        <taxon>Dikarya</taxon>
        <taxon>Ascomycota</taxon>
        <taxon>Saccharomycotina</taxon>
        <taxon>Saccharomycetes</taxon>
        <taxon>Saccharomycetales</taxon>
        <taxon>Saccharomycetaceae</taxon>
        <taxon>Saccharomyces</taxon>
    </lineage>
</organism>
<reference key="1">
    <citation type="journal article" date="1995" name="Genes Dev.">
        <title>GCD10, a translational repressor of GCN4, is the RNA-binding subunit of eukaryotic translation initiation factor-3.</title>
        <authorList>
            <person name="Garcia-Barrio M.T."/>
            <person name="Naranda T."/>
            <person name="Vazquez De Aldana C.R."/>
            <person name="Cuesta R."/>
            <person name="Hinnebusch A.G."/>
            <person name="Hershey J.W."/>
            <person name="Tamame M."/>
        </authorList>
    </citation>
    <scope>NUCLEOTIDE SEQUENCE [GENOMIC DNA]</scope>
    <scope>FUNCTION IN TRANSLATIONAL REPRESSION</scope>
    <scope>RNA-BINDING</scope>
    <source>
        <strain>ATCC 204508 / S288c</strain>
    </source>
</reference>
<reference key="2">
    <citation type="journal article" date="1995" name="Yeast">
        <title>The sequence of a 44 420 bp fragment located on the left arm of chromosome XIV from Saccharomyces cerevisiae.</title>
        <authorList>
            <person name="Bergez P."/>
            <person name="Doignon F."/>
            <person name="Crouzet M."/>
        </authorList>
    </citation>
    <scope>NUCLEOTIDE SEQUENCE [GENOMIC DNA]</scope>
    <source>
        <strain>S288c / FY1676</strain>
    </source>
</reference>
<reference key="3">
    <citation type="journal article" date="1996" name="Yeast">
        <authorList>
            <person name="Bergez P."/>
            <person name="Doignon F."/>
            <person name="Crouzet M."/>
        </authorList>
    </citation>
    <scope>ERRATUM OF PUBMED:8533472</scope>
</reference>
<reference key="4">
    <citation type="journal article" date="1997" name="Nature">
        <title>The nucleotide sequence of Saccharomyces cerevisiae chromosome XIV and its evolutionary implications.</title>
        <authorList>
            <person name="Philippsen P."/>
            <person name="Kleine K."/>
            <person name="Poehlmann R."/>
            <person name="Duesterhoeft A."/>
            <person name="Hamberg K."/>
            <person name="Hegemann J.H."/>
            <person name="Obermaier B."/>
            <person name="Urrestarazu L.A."/>
            <person name="Aert R."/>
            <person name="Albermann K."/>
            <person name="Altmann R."/>
            <person name="Andre B."/>
            <person name="Baladron V."/>
            <person name="Ballesta J.P.G."/>
            <person name="Becam A.-M."/>
            <person name="Beinhauer J.D."/>
            <person name="Boskovic J."/>
            <person name="Buitrago M.J."/>
            <person name="Bussereau F."/>
            <person name="Coster F."/>
            <person name="Crouzet M."/>
            <person name="D'Angelo M."/>
            <person name="Dal Pero F."/>
            <person name="De Antoni A."/>
            <person name="del Rey F."/>
            <person name="Doignon F."/>
            <person name="Domdey H."/>
            <person name="Dubois E."/>
            <person name="Fiedler T.A."/>
            <person name="Fleig U."/>
            <person name="Floeth M."/>
            <person name="Fritz C."/>
            <person name="Gaillardin C."/>
            <person name="Garcia-Cantalejo J.M."/>
            <person name="Glansdorff N."/>
            <person name="Goffeau A."/>
            <person name="Gueldener U."/>
            <person name="Herbert C.J."/>
            <person name="Heumann K."/>
            <person name="Heuss-Neitzel D."/>
            <person name="Hilbert H."/>
            <person name="Hinni K."/>
            <person name="Iraqui Houssaini I."/>
            <person name="Jacquet M."/>
            <person name="Jimenez A."/>
            <person name="Jonniaux J.-L."/>
            <person name="Karpfinger-Hartl L."/>
            <person name="Lanfranchi G."/>
            <person name="Lepingle A."/>
            <person name="Levesque H."/>
            <person name="Lyck R."/>
            <person name="Maftahi M."/>
            <person name="Mallet L."/>
            <person name="Maurer C.T.C."/>
            <person name="Messenguy F."/>
            <person name="Mewes H.-W."/>
            <person name="Moestl D."/>
            <person name="Nasr F."/>
            <person name="Nicaud J.-M."/>
            <person name="Niedenthal R.K."/>
            <person name="Pandolfo D."/>
            <person name="Pierard A."/>
            <person name="Piravandi E."/>
            <person name="Planta R.J."/>
            <person name="Pohl T.M."/>
            <person name="Purnelle B."/>
            <person name="Rebischung C."/>
            <person name="Remacha M.A."/>
            <person name="Revuelta J.L."/>
            <person name="Rinke M."/>
            <person name="Saiz J.E."/>
            <person name="Sartorello F."/>
            <person name="Scherens B."/>
            <person name="Sen-Gupta M."/>
            <person name="Soler-Mira A."/>
            <person name="Urbanus J.H.M."/>
            <person name="Valle G."/>
            <person name="Van Dyck L."/>
            <person name="Verhasselt P."/>
            <person name="Vierendeels F."/>
            <person name="Vissers S."/>
            <person name="Voet M."/>
            <person name="Volckaert G."/>
            <person name="Wach A."/>
            <person name="Wambutt R."/>
            <person name="Wedler H."/>
            <person name="Zollner A."/>
            <person name="Hani J."/>
        </authorList>
    </citation>
    <scope>NUCLEOTIDE SEQUENCE [LARGE SCALE GENOMIC DNA]</scope>
    <source>
        <strain>ATCC 204508 / S288c</strain>
    </source>
</reference>
<reference key="5">
    <citation type="journal article" date="2014" name="G3 (Bethesda)">
        <title>The reference genome sequence of Saccharomyces cerevisiae: Then and now.</title>
        <authorList>
            <person name="Engel S.R."/>
            <person name="Dietrich F.S."/>
            <person name="Fisk D.G."/>
            <person name="Binkley G."/>
            <person name="Balakrishnan R."/>
            <person name="Costanzo M.C."/>
            <person name="Dwight S.S."/>
            <person name="Hitz B.C."/>
            <person name="Karra K."/>
            <person name="Nash R.S."/>
            <person name="Weng S."/>
            <person name="Wong E.D."/>
            <person name="Lloyd P."/>
            <person name="Skrzypek M.S."/>
            <person name="Miyasato S.R."/>
            <person name="Simison M."/>
            <person name="Cherry J.M."/>
        </authorList>
    </citation>
    <scope>GENOME REANNOTATION</scope>
    <source>
        <strain>ATCC 204508 / S288c</strain>
    </source>
</reference>
<reference key="6">
    <citation type="journal article" date="1998" name="Genes Dev.">
        <title>The essential Gcd10p-Gcd14p nuclear complex is required for 1-methyladenosine modification and maturation of initiator methionyl-tRNA.</title>
        <authorList>
            <person name="Anderson J."/>
            <person name="Phan L."/>
            <person name="Cuesta R."/>
            <person name="Carlson B.A."/>
            <person name="Pak M."/>
            <person name="Asano K."/>
            <person name="Bjoerk G.R."/>
            <person name="Tamame M."/>
            <person name="Hinnebusch A.G."/>
        </authorList>
    </citation>
    <scope>FUNCTION AS A TRNA METHYLTRANSFERASE SUBUNIT</scope>
    <scope>SUBUNIT</scope>
    <scope>SUBCELLULAR LOCATION</scope>
</reference>
<reference key="7">
    <citation type="journal article" date="2000" name="Proc. Natl. Acad. Sci. U.S.A.">
        <title>The Gcd10p/Gcd14p complex is the essential two-subunit tRNA(1-methyladenosine) methyltransferase of Saccharomyces cerevisiae.</title>
        <authorList>
            <person name="Anderson J."/>
            <person name="Phan L."/>
            <person name="Hinnebusch A.G."/>
        </authorList>
    </citation>
    <scope>FUNCTION AS A TRNA METHYLTRANSFERASE SUBUNIT</scope>
</reference>
<reference key="8">
    <citation type="journal article" date="2003" name="Nature">
        <title>Global analysis of protein expression in yeast.</title>
        <authorList>
            <person name="Ghaemmaghami S."/>
            <person name="Huh W.-K."/>
            <person name="Bower K."/>
            <person name="Howson R.W."/>
            <person name="Belle A."/>
            <person name="Dephoure N."/>
            <person name="O'Shea E.K."/>
            <person name="Weissman J.S."/>
        </authorList>
    </citation>
    <scope>LEVEL OF PROTEIN EXPRESSION [LARGE SCALE ANALYSIS]</scope>
</reference>
<reference key="9">
    <citation type="journal article" date="2008" name="Mol. Cell. Proteomics">
        <title>A multidimensional chromatography technology for in-depth phosphoproteome analysis.</title>
        <authorList>
            <person name="Albuquerque C.P."/>
            <person name="Smolka M.B."/>
            <person name="Payne S.H."/>
            <person name="Bafna V."/>
            <person name="Eng J."/>
            <person name="Zhou H."/>
        </authorList>
    </citation>
    <scope>IDENTIFICATION BY MASS SPECTROMETRY [LARGE SCALE ANALYSIS]</scope>
</reference>
<reference evidence="9 10" key="10">
    <citation type="journal article" date="2016" name="Sci. Rep.">
        <title>Crystal structure of the two-subunit tRNA m(1)A58 methyltransferase TRM6-TRM61 from Saccharomyces cerevisiae.</title>
        <authorList>
            <person name="Wang M."/>
            <person name="Zhu Y."/>
            <person name="Wang C."/>
            <person name="Fan X."/>
            <person name="Jiang X."/>
            <person name="Ebrahimi M."/>
            <person name="Qiao Z."/>
            <person name="Niu L."/>
            <person name="Teng M."/>
            <person name="Li X."/>
        </authorList>
    </citation>
    <scope>X-RAY CRYSTALLOGRAPHY (2.20 ANGSTROMS)</scope>
</reference>
<evidence type="ECO:0000256" key="1">
    <source>
        <dbReference type="SAM" id="MobiDB-lite"/>
    </source>
</evidence>
<evidence type="ECO:0000269" key="2">
    <source>
    </source>
</evidence>
<evidence type="ECO:0000269" key="3">
    <source>
    </source>
</evidence>
<evidence type="ECO:0000269" key="4">
    <source>
    </source>
</evidence>
<evidence type="ECO:0000269" key="5">
    <source>
    </source>
</evidence>
<evidence type="ECO:0000269" key="6">
    <source>
    </source>
</evidence>
<evidence type="ECO:0000305" key="7"/>
<evidence type="ECO:0000305" key="8">
    <source>
    </source>
</evidence>
<evidence type="ECO:0007744" key="9">
    <source>
        <dbReference type="PDB" id="5EQJ"/>
    </source>
</evidence>
<evidence type="ECO:0007744" key="10">
    <source>
        <dbReference type="PDB" id="5ERG"/>
    </source>
</evidence>
<evidence type="ECO:0007829" key="11">
    <source>
        <dbReference type="PDB" id="5EQJ"/>
    </source>
</evidence>
<evidence type="ECO:0007829" key="12">
    <source>
        <dbReference type="PDB" id="5ERG"/>
    </source>
</evidence>
<sequence>MNALTTIDFNQHVIVRLPSKNYKIVELKPNTSVSLGKFGAFEVNDIIGYPFGLTFEIYYDGEEVSSDENRDSKPKNKIPIGKVRLLSQEIKDVNNDKDDGQSEPPLSIKEKSVSLELSSIDSSATNQNLVNMGSKAQELTVEEIEKMKQESLSSKEIIDKIIKSHKSFHNKTVYSQEKYVNRKKQKFAKYFTVEYLSSSNLLQFLIDKGDIQRVLDMSQESMGMLLNLANIQSEGNYLCMDETGGLLVYFLLERMFGGDNESKSKGKVIVIHENEHANLDLLKFANYSEKFIKEHVHTISLLDFFEPPTLQEIQSRFTPLPKEEARALKGGKKNSYYRKLRWYNTQWQILELTGEFLYDGLVMATTLHLPTLVPKLAEKIHGSRPIVCYGQFKETLLELAHTLYSDLRFLAPSILETRCRPYQSIRGKLHPLMTMKGGGGYLMWCHRVIPAPEPVSENATAADSSEKLAEHGAKKQKI</sequence>
<keyword id="KW-0002">3D-structure</keyword>
<keyword id="KW-0539">Nucleus</keyword>
<keyword id="KW-1185">Reference proteome</keyword>
<keyword id="KW-0678">Repressor</keyword>
<keyword id="KW-0694">RNA-binding</keyword>
<keyword id="KW-0819">tRNA processing</keyword>
<comment type="function">
    <text evidence="2 5 6">Substrate-binding subunit of tRNA (adenine-N(1)-)-methyltransferase, which catalyzes the formation of N(1)-methyladenine at position 58 (m1A58) in initiator methionyl-tRNA (PubMed:10779558, PubMed:9851972). Also required for repression of GCN4 mRNA translation by the upstream open reading frames (uORFs) under conditions of amino acid sufficiency (PubMed:7542616).</text>
</comment>
<comment type="subunit">
    <text evidence="4 8">Heterotetramer; composed of two copies of TRM6/GCD10 and two copies of TRM61/GCD14.</text>
</comment>
<comment type="interaction">
    <interactant intactId="EBI-8995">
        <id>P41814</id>
    </interactant>
    <interactant intactId="EBI-7416">
        <id>P46959</id>
        <label>GCD14</label>
    </interactant>
    <organismsDiffer>false</organismsDiffer>
    <experiments>4</experiments>
</comment>
<comment type="subcellular location">
    <subcellularLocation>
        <location evidence="6">Nucleus</location>
    </subcellularLocation>
</comment>
<comment type="miscellaneous">
    <text evidence="3">Present with 2580 molecules/cell in log phase SD medium.</text>
</comment>
<comment type="similarity">
    <text evidence="7">Belongs to the TRM6/GCD10 family.</text>
</comment>
<name>TRM6_YEAST</name>
<proteinExistence type="evidence at protein level"/>